<protein>
    <recommendedName>
        <fullName evidence="1">Protein SprT-like</fullName>
    </recommendedName>
</protein>
<gene>
    <name type="ordered locus">MW1986</name>
</gene>
<organism>
    <name type="scientific">Staphylococcus aureus (strain MW2)</name>
    <dbReference type="NCBI Taxonomy" id="196620"/>
    <lineage>
        <taxon>Bacteria</taxon>
        <taxon>Bacillati</taxon>
        <taxon>Bacillota</taxon>
        <taxon>Bacilli</taxon>
        <taxon>Bacillales</taxon>
        <taxon>Staphylococcaceae</taxon>
        <taxon>Staphylococcus</taxon>
    </lineage>
</organism>
<evidence type="ECO:0000255" key="1">
    <source>
        <dbReference type="HAMAP-Rule" id="MF_00745"/>
    </source>
</evidence>
<proteinExistence type="inferred from homology"/>
<reference key="1">
    <citation type="journal article" date="2002" name="Lancet">
        <title>Genome and virulence determinants of high virulence community-acquired MRSA.</title>
        <authorList>
            <person name="Baba T."/>
            <person name="Takeuchi F."/>
            <person name="Kuroda M."/>
            <person name="Yuzawa H."/>
            <person name="Aoki K."/>
            <person name="Oguchi A."/>
            <person name="Nagai Y."/>
            <person name="Iwama N."/>
            <person name="Asano K."/>
            <person name="Naimi T."/>
            <person name="Kuroda H."/>
            <person name="Cui L."/>
            <person name="Yamamoto K."/>
            <person name="Hiramatsu K."/>
        </authorList>
    </citation>
    <scope>NUCLEOTIDE SEQUENCE [LARGE SCALE GENOMIC DNA]</scope>
    <source>
        <strain>MW2</strain>
    </source>
</reference>
<accession>P67728</accession>
<accession>Q99SJ0</accession>
<feature type="chain" id="PRO_0000213301" description="Protein SprT-like">
    <location>
        <begin position="1"/>
        <end position="151"/>
    </location>
</feature>
<feature type="domain" description="SprT-like" evidence="1">
    <location>
        <begin position="6"/>
        <end position="147"/>
    </location>
</feature>
<feature type="active site" evidence="1">
    <location>
        <position position="68"/>
    </location>
</feature>
<feature type="binding site" evidence="1">
    <location>
        <position position="67"/>
    </location>
    <ligand>
        <name>Zn(2+)</name>
        <dbReference type="ChEBI" id="CHEBI:29105"/>
    </ligand>
</feature>
<feature type="binding site" evidence="1">
    <location>
        <position position="71"/>
    </location>
    <ligand>
        <name>Zn(2+)</name>
        <dbReference type="ChEBI" id="CHEBI:29105"/>
    </ligand>
</feature>
<dbReference type="EMBL" id="BA000033">
    <property type="protein sequence ID" value="BAB95851.1"/>
    <property type="molecule type" value="Genomic_DNA"/>
</dbReference>
<dbReference type="RefSeq" id="WP_001058111.1">
    <property type="nucleotide sequence ID" value="NC_003923.1"/>
</dbReference>
<dbReference type="KEGG" id="sam:MW1986"/>
<dbReference type="HOGENOM" id="CLU_123820_0_0_9"/>
<dbReference type="GO" id="GO:0005737">
    <property type="term" value="C:cytoplasm"/>
    <property type="evidence" value="ECO:0007669"/>
    <property type="project" value="UniProtKB-SubCell"/>
</dbReference>
<dbReference type="GO" id="GO:0008270">
    <property type="term" value="F:zinc ion binding"/>
    <property type="evidence" value="ECO:0007669"/>
    <property type="project" value="UniProtKB-UniRule"/>
</dbReference>
<dbReference type="GO" id="GO:0006950">
    <property type="term" value="P:response to stress"/>
    <property type="evidence" value="ECO:0007669"/>
    <property type="project" value="UniProtKB-ARBA"/>
</dbReference>
<dbReference type="HAMAP" id="MF_00745">
    <property type="entry name" value="SprT_like"/>
    <property type="match status" value="1"/>
</dbReference>
<dbReference type="InterPro" id="IPR006640">
    <property type="entry name" value="SprT-like_domain"/>
</dbReference>
<dbReference type="InterPro" id="IPR035240">
    <property type="entry name" value="SprT_Zn_ribbon"/>
</dbReference>
<dbReference type="InterPro" id="IPR023524">
    <property type="entry name" value="Uncharacterised_SprT-like"/>
</dbReference>
<dbReference type="NCBIfam" id="NF003339">
    <property type="entry name" value="PRK04351.1"/>
    <property type="match status" value="1"/>
</dbReference>
<dbReference type="Pfam" id="PF10263">
    <property type="entry name" value="SprT-like"/>
    <property type="match status" value="1"/>
</dbReference>
<dbReference type="Pfam" id="PF17283">
    <property type="entry name" value="Zn_ribbon_SprT"/>
    <property type="match status" value="1"/>
</dbReference>
<dbReference type="SMART" id="SM00731">
    <property type="entry name" value="SprT"/>
    <property type="match status" value="1"/>
</dbReference>
<comment type="cofactor">
    <cofactor evidence="1">
        <name>Zn(2+)</name>
        <dbReference type="ChEBI" id="CHEBI:29105"/>
    </cofactor>
    <text evidence="1">Binds 1 zinc ion.</text>
</comment>
<comment type="subcellular location">
    <subcellularLocation>
        <location evidence="1">Cytoplasm</location>
    </subcellularLocation>
</comment>
<comment type="similarity">
    <text evidence="1">Belongs to the SprT family.</text>
</comment>
<keyword id="KW-0963">Cytoplasm</keyword>
<keyword id="KW-0479">Metal-binding</keyword>
<keyword id="KW-0862">Zinc</keyword>
<sequence length="151" mass="18186">MNNDKLQRMVENLSEEKFGRTFRHCAYFNKRLRTTGGRYLLKSHDIEINPKQYEHYGEDAVVKIILHELCHYHLHIAGKGYQHKDQDFKRLSQQVGAPRFCNSIESYQQRANYEYYCTKCHAKYIRIRKVDTNRMRCGHCNGKLRMKRQLK</sequence>
<name>SPRTL_STAAW</name>